<organism>
    <name type="scientific">Dechloromonas aromatica (strain RCB)</name>
    <dbReference type="NCBI Taxonomy" id="159087"/>
    <lineage>
        <taxon>Bacteria</taxon>
        <taxon>Pseudomonadati</taxon>
        <taxon>Pseudomonadota</taxon>
        <taxon>Betaproteobacteria</taxon>
        <taxon>Rhodocyclales</taxon>
        <taxon>Azonexaceae</taxon>
        <taxon>Dechloromonas</taxon>
    </lineage>
</organism>
<proteinExistence type="inferred from homology"/>
<reference key="1">
    <citation type="journal article" date="2009" name="BMC Genomics">
        <title>Metabolic analysis of the soil microbe Dechloromonas aromatica str. RCB: indications of a surprisingly complex life-style and cryptic anaerobic pathways for aromatic degradation.</title>
        <authorList>
            <person name="Salinero K.K."/>
            <person name="Keller K."/>
            <person name="Feil W.S."/>
            <person name="Feil H."/>
            <person name="Trong S."/>
            <person name="Di Bartolo G."/>
            <person name="Lapidus A."/>
        </authorList>
    </citation>
    <scope>NUCLEOTIDE SEQUENCE [LARGE SCALE GENOMIC DNA]</scope>
    <source>
        <strain>RCB</strain>
    </source>
</reference>
<name>SYM_DECAR</name>
<comment type="function">
    <text evidence="1">Is required not only for elongation of protein synthesis but also for the initiation of all mRNA translation through initiator tRNA(fMet) aminoacylation.</text>
</comment>
<comment type="catalytic activity">
    <reaction evidence="1">
        <text>tRNA(Met) + L-methionine + ATP = L-methionyl-tRNA(Met) + AMP + diphosphate</text>
        <dbReference type="Rhea" id="RHEA:13481"/>
        <dbReference type="Rhea" id="RHEA-COMP:9667"/>
        <dbReference type="Rhea" id="RHEA-COMP:9698"/>
        <dbReference type="ChEBI" id="CHEBI:30616"/>
        <dbReference type="ChEBI" id="CHEBI:33019"/>
        <dbReference type="ChEBI" id="CHEBI:57844"/>
        <dbReference type="ChEBI" id="CHEBI:78442"/>
        <dbReference type="ChEBI" id="CHEBI:78530"/>
        <dbReference type="ChEBI" id="CHEBI:456215"/>
        <dbReference type="EC" id="6.1.1.10"/>
    </reaction>
</comment>
<comment type="cofactor">
    <cofactor evidence="1">
        <name>Zn(2+)</name>
        <dbReference type="ChEBI" id="CHEBI:29105"/>
    </cofactor>
    <text evidence="1">Binds 1 zinc ion per subunit.</text>
</comment>
<comment type="subunit">
    <text evidence="1">Homodimer.</text>
</comment>
<comment type="subcellular location">
    <subcellularLocation>
        <location evidence="1">Cytoplasm</location>
    </subcellularLocation>
</comment>
<comment type="similarity">
    <text evidence="1">Belongs to the class-I aminoacyl-tRNA synthetase family. MetG type 1 subfamily.</text>
</comment>
<keyword id="KW-0030">Aminoacyl-tRNA synthetase</keyword>
<keyword id="KW-0067">ATP-binding</keyword>
<keyword id="KW-0963">Cytoplasm</keyword>
<keyword id="KW-0436">Ligase</keyword>
<keyword id="KW-0479">Metal-binding</keyword>
<keyword id="KW-0547">Nucleotide-binding</keyword>
<keyword id="KW-0648">Protein biosynthesis</keyword>
<keyword id="KW-0694">RNA-binding</keyword>
<keyword id="KW-0820">tRNA-binding</keyword>
<keyword id="KW-0862">Zinc</keyword>
<feature type="chain" id="PRO_0000331810" description="Methionine--tRNA ligase">
    <location>
        <begin position="1"/>
        <end position="696"/>
    </location>
</feature>
<feature type="domain" description="tRNA-binding" evidence="1">
    <location>
        <begin position="591"/>
        <end position="696"/>
    </location>
</feature>
<feature type="region of interest" description="Disordered" evidence="2">
    <location>
        <begin position="556"/>
        <end position="580"/>
    </location>
</feature>
<feature type="short sequence motif" description="'HIGH' region">
    <location>
        <begin position="12"/>
        <end position="22"/>
    </location>
</feature>
<feature type="short sequence motif" description="'KMSKS' region">
    <location>
        <begin position="336"/>
        <end position="340"/>
    </location>
</feature>
<feature type="binding site" evidence="1">
    <location>
        <position position="143"/>
    </location>
    <ligand>
        <name>Zn(2+)</name>
        <dbReference type="ChEBI" id="CHEBI:29105"/>
    </ligand>
</feature>
<feature type="binding site" evidence="1">
    <location>
        <position position="146"/>
    </location>
    <ligand>
        <name>Zn(2+)</name>
        <dbReference type="ChEBI" id="CHEBI:29105"/>
    </ligand>
</feature>
<feature type="binding site" evidence="1">
    <location>
        <position position="156"/>
    </location>
    <ligand>
        <name>Zn(2+)</name>
        <dbReference type="ChEBI" id="CHEBI:29105"/>
    </ligand>
</feature>
<feature type="binding site" evidence="1">
    <location>
        <position position="159"/>
    </location>
    <ligand>
        <name>Zn(2+)</name>
        <dbReference type="ChEBI" id="CHEBI:29105"/>
    </ligand>
</feature>
<feature type="binding site" evidence="1">
    <location>
        <position position="339"/>
    </location>
    <ligand>
        <name>ATP</name>
        <dbReference type="ChEBI" id="CHEBI:30616"/>
    </ligand>
</feature>
<protein>
    <recommendedName>
        <fullName evidence="1">Methionine--tRNA ligase</fullName>
        <ecNumber evidence="1">6.1.1.10</ecNumber>
    </recommendedName>
    <alternativeName>
        <fullName evidence="1">Methionyl-tRNA synthetase</fullName>
        <shortName evidence="1">MetRS</shortName>
    </alternativeName>
</protein>
<sequence length="696" mass="77848">MSRKILVTSALPYANGAIHLGHLVEYIQTDIWVRFQKMSGNECWYVCADDTHGTPIMLRAEKEGITPEQLIARVHGEHSRDFAGFHVGFDNYYSTHSDETRDCANDIYLKLRAAGLIETRTIEQYYDPVKQLFLPDRFIKGECPKCGAKDQYGDNCESCGAAYAPTDLKEPYSAISGAKPELRTSEHYFFKLSDPRCEAFLRQYTSRDNGVLQNEAANKMQEWLGAPGENKLTDWDISRDAPYFGFEIPDAPGKYFYVWLDAPIGYMGSFKNLCARNGLDFNEYFKPDAKTELYHFIGKDILYFHALFWPAELAHAGFRTPTKIFAHGFLTVDGAKMSKSRGTFITAESFLKTGLNPEWLRYYYAAKLSATMEDIDLSLDDFVARVNSDLVGKYVNIASRSAGFITKRFNGQLAPATAELPAIKGIQEAASRIAELYEAREFGKAMREIMALTDAANQYVDSVKPWELAKQEGKEVELHAACTNALNLFRLLTVLLKPILPIVAEKVEKFLNIAPLHWADTQSLLAGGHAINAYEHLMTRVDPKLIEKLVEANKESLAPAPEAQSQQRHAEHQQNEVTAESPWEPFCNIDDFMKVDLRIVRIANAEHVEGADKLVRLTLDVGNNETRNVFAGIKAAYDPAQLIGRLTVMVANLAPRKMKFGLSEGMVLAASDGEGKTPGIFLLSPDSGAQPGMRVK</sequence>
<gene>
    <name evidence="1" type="primary">metG</name>
    <name type="ordered locus">Daro_0574</name>
</gene>
<evidence type="ECO:0000255" key="1">
    <source>
        <dbReference type="HAMAP-Rule" id="MF_00098"/>
    </source>
</evidence>
<evidence type="ECO:0000256" key="2">
    <source>
        <dbReference type="SAM" id="MobiDB-lite"/>
    </source>
</evidence>
<accession>Q47IK0</accession>
<dbReference type="EC" id="6.1.1.10" evidence="1"/>
<dbReference type="EMBL" id="CP000089">
    <property type="protein sequence ID" value="AAZ45331.1"/>
    <property type="molecule type" value="Genomic_DNA"/>
</dbReference>
<dbReference type="SMR" id="Q47IK0"/>
<dbReference type="STRING" id="159087.Daro_0574"/>
<dbReference type="KEGG" id="dar:Daro_0574"/>
<dbReference type="eggNOG" id="COG0073">
    <property type="taxonomic scope" value="Bacteria"/>
</dbReference>
<dbReference type="eggNOG" id="COG0143">
    <property type="taxonomic scope" value="Bacteria"/>
</dbReference>
<dbReference type="HOGENOM" id="CLU_009710_7_0_4"/>
<dbReference type="OrthoDB" id="9810191at2"/>
<dbReference type="GO" id="GO:0005829">
    <property type="term" value="C:cytosol"/>
    <property type="evidence" value="ECO:0007669"/>
    <property type="project" value="TreeGrafter"/>
</dbReference>
<dbReference type="GO" id="GO:0005524">
    <property type="term" value="F:ATP binding"/>
    <property type="evidence" value="ECO:0007669"/>
    <property type="project" value="UniProtKB-UniRule"/>
</dbReference>
<dbReference type="GO" id="GO:0046872">
    <property type="term" value="F:metal ion binding"/>
    <property type="evidence" value="ECO:0007669"/>
    <property type="project" value="UniProtKB-KW"/>
</dbReference>
<dbReference type="GO" id="GO:0004825">
    <property type="term" value="F:methionine-tRNA ligase activity"/>
    <property type="evidence" value="ECO:0007669"/>
    <property type="project" value="UniProtKB-UniRule"/>
</dbReference>
<dbReference type="GO" id="GO:0000049">
    <property type="term" value="F:tRNA binding"/>
    <property type="evidence" value="ECO:0007669"/>
    <property type="project" value="UniProtKB-KW"/>
</dbReference>
<dbReference type="GO" id="GO:0006431">
    <property type="term" value="P:methionyl-tRNA aminoacylation"/>
    <property type="evidence" value="ECO:0007669"/>
    <property type="project" value="UniProtKB-UniRule"/>
</dbReference>
<dbReference type="CDD" id="cd07957">
    <property type="entry name" value="Anticodon_Ia_Met"/>
    <property type="match status" value="1"/>
</dbReference>
<dbReference type="CDD" id="cd00814">
    <property type="entry name" value="MetRS_core"/>
    <property type="match status" value="1"/>
</dbReference>
<dbReference type="CDD" id="cd02800">
    <property type="entry name" value="tRNA_bind_EcMetRS_like"/>
    <property type="match status" value="1"/>
</dbReference>
<dbReference type="FunFam" id="1.10.730.10:FF:000005">
    <property type="entry name" value="Methionine--tRNA ligase"/>
    <property type="match status" value="1"/>
</dbReference>
<dbReference type="FunFam" id="2.20.28.20:FF:000001">
    <property type="entry name" value="Methionine--tRNA ligase"/>
    <property type="match status" value="1"/>
</dbReference>
<dbReference type="FunFam" id="2.40.50.140:FF:000042">
    <property type="entry name" value="Methionine--tRNA ligase"/>
    <property type="match status" value="1"/>
</dbReference>
<dbReference type="Gene3D" id="3.40.50.620">
    <property type="entry name" value="HUPs"/>
    <property type="match status" value="1"/>
</dbReference>
<dbReference type="Gene3D" id="1.10.730.10">
    <property type="entry name" value="Isoleucyl-tRNA Synthetase, Domain 1"/>
    <property type="match status" value="1"/>
</dbReference>
<dbReference type="Gene3D" id="2.20.28.20">
    <property type="entry name" value="Methionyl-tRNA synthetase, Zn-domain"/>
    <property type="match status" value="1"/>
</dbReference>
<dbReference type="Gene3D" id="2.40.50.140">
    <property type="entry name" value="Nucleic acid-binding proteins"/>
    <property type="match status" value="1"/>
</dbReference>
<dbReference type="HAMAP" id="MF_00098">
    <property type="entry name" value="Met_tRNA_synth_type1"/>
    <property type="match status" value="1"/>
</dbReference>
<dbReference type="InterPro" id="IPR001412">
    <property type="entry name" value="aa-tRNA-synth_I_CS"/>
</dbReference>
<dbReference type="InterPro" id="IPR041872">
    <property type="entry name" value="Anticodon_Met"/>
</dbReference>
<dbReference type="InterPro" id="IPR004495">
    <property type="entry name" value="Met-tRNA-synth_bsu_C"/>
</dbReference>
<dbReference type="InterPro" id="IPR023458">
    <property type="entry name" value="Met-tRNA_ligase_1"/>
</dbReference>
<dbReference type="InterPro" id="IPR014758">
    <property type="entry name" value="Met-tRNA_synth"/>
</dbReference>
<dbReference type="InterPro" id="IPR015413">
    <property type="entry name" value="Methionyl/Leucyl_tRNA_Synth"/>
</dbReference>
<dbReference type="InterPro" id="IPR033911">
    <property type="entry name" value="MetRS_core"/>
</dbReference>
<dbReference type="InterPro" id="IPR029038">
    <property type="entry name" value="MetRS_Zn"/>
</dbReference>
<dbReference type="InterPro" id="IPR012340">
    <property type="entry name" value="NA-bd_OB-fold"/>
</dbReference>
<dbReference type="InterPro" id="IPR014729">
    <property type="entry name" value="Rossmann-like_a/b/a_fold"/>
</dbReference>
<dbReference type="InterPro" id="IPR002547">
    <property type="entry name" value="tRNA-bd_dom"/>
</dbReference>
<dbReference type="InterPro" id="IPR009080">
    <property type="entry name" value="tRNAsynth_Ia_anticodon-bd"/>
</dbReference>
<dbReference type="NCBIfam" id="TIGR00398">
    <property type="entry name" value="metG"/>
    <property type="match status" value="1"/>
</dbReference>
<dbReference type="NCBIfam" id="TIGR00399">
    <property type="entry name" value="metG_C_term"/>
    <property type="match status" value="1"/>
</dbReference>
<dbReference type="NCBIfam" id="NF001100">
    <property type="entry name" value="PRK00133.1"/>
    <property type="match status" value="1"/>
</dbReference>
<dbReference type="PANTHER" id="PTHR45765">
    <property type="entry name" value="METHIONINE--TRNA LIGASE"/>
    <property type="match status" value="1"/>
</dbReference>
<dbReference type="PANTHER" id="PTHR45765:SF1">
    <property type="entry name" value="METHIONINE--TRNA LIGASE, CYTOPLASMIC"/>
    <property type="match status" value="1"/>
</dbReference>
<dbReference type="Pfam" id="PF19303">
    <property type="entry name" value="Anticodon_3"/>
    <property type="match status" value="1"/>
</dbReference>
<dbReference type="Pfam" id="PF09334">
    <property type="entry name" value="tRNA-synt_1g"/>
    <property type="match status" value="1"/>
</dbReference>
<dbReference type="Pfam" id="PF01588">
    <property type="entry name" value="tRNA_bind"/>
    <property type="match status" value="1"/>
</dbReference>
<dbReference type="PRINTS" id="PR01041">
    <property type="entry name" value="TRNASYNTHMET"/>
</dbReference>
<dbReference type="SUPFAM" id="SSF47323">
    <property type="entry name" value="Anticodon-binding domain of a subclass of class I aminoacyl-tRNA synthetases"/>
    <property type="match status" value="1"/>
</dbReference>
<dbReference type="SUPFAM" id="SSF57770">
    <property type="entry name" value="Methionyl-tRNA synthetase (MetRS), Zn-domain"/>
    <property type="match status" value="1"/>
</dbReference>
<dbReference type="SUPFAM" id="SSF50249">
    <property type="entry name" value="Nucleic acid-binding proteins"/>
    <property type="match status" value="1"/>
</dbReference>
<dbReference type="SUPFAM" id="SSF52374">
    <property type="entry name" value="Nucleotidylyl transferase"/>
    <property type="match status" value="1"/>
</dbReference>
<dbReference type="PROSITE" id="PS00178">
    <property type="entry name" value="AA_TRNA_LIGASE_I"/>
    <property type="match status" value="1"/>
</dbReference>
<dbReference type="PROSITE" id="PS50886">
    <property type="entry name" value="TRBD"/>
    <property type="match status" value="1"/>
</dbReference>